<name>C78A9_ARATH</name>
<comment type="function">
    <text evidence="3 4 5">Plays a role in seed and fruit development. Functions probably in association with CYP78A6 in the regulation of seed growth.</text>
</comment>
<comment type="cofactor">
    <cofactor evidence="1">
        <name>heme</name>
        <dbReference type="ChEBI" id="CHEBI:30413"/>
    </cofactor>
</comment>
<comment type="interaction">
    <interactant intactId="EBI-1238437">
        <id>Q9SLP1</id>
    </interactant>
    <interactant intactId="EBI-1235664">
        <id>P25854</id>
        <label>CAM4</label>
    </interactant>
    <organismsDiffer>false</organismsDiffer>
    <experiments>2</experiments>
</comment>
<comment type="interaction">
    <interactant intactId="EBI-1238437">
        <id>Q9SLP1</id>
    </interactant>
    <interactant intactId="EBI-1236031">
        <id>P59220</id>
        <label>CAM7</label>
    </interactant>
    <organismsDiffer>false</organismsDiffer>
    <experiments>2</experiments>
</comment>
<comment type="subcellular location">
    <subcellularLocation>
        <location evidence="6">Membrane</location>
        <topology evidence="6">Single-pass membrane protein</topology>
    </subcellularLocation>
</comment>
<comment type="alternative products">
    <event type="alternative splicing"/>
    <isoform>
        <id>Q9SLP1-1</id>
        <name>1</name>
        <sequence type="displayed"/>
    </isoform>
    <text>A number of isoforms are produced. According to EST sequences.</text>
</comment>
<comment type="tissue specificity">
    <text evidence="3">Expressed in the funiculus of developing ovules.</text>
</comment>
<comment type="disruption phenotype">
    <text evidence="4">Slight reduction in seed size.</text>
</comment>
<comment type="miscellaneous">
    <text evidence="7">The gain of function mutant 28-5 (T-DNA tagging) in apetala2-1 (ap2-1) mutant background show enlarged and wide pistils and siliques.</text>
</comment>
<comment type="similarity">
    <text evidence="6">Belongs to the cytochrome P450 family.</text>
</comment>
<accession>Q9SLP1</accession>
<accession>Q8LBY2</accession>
<feature type="chain" id="PRO_0000422989" description="Cytochrome P450 78A9">
    <location>
        <begin position="1"/>
        <end position="534"/>
    </location>
</feature>
<feature type="transmembrane region" description="Helical" evidence="2">
    <location>
        <begin position="26"/>
        <end position="46"/>
    </location>
</feature>
<feature type="binding site" description="axial binding residue" evidence="1">
    <location>
        <position position="474"/>
    </location>
    <ligand>
        <name>heme</name>
        <dbReference type="ChEBI" id="CHEBI:30413"/>
    </ligand>
    <ligandPart>
        <name>Fe</name>
        <dbReference type="ChEBI" id="CHEBI:18248"/>
    </ligandPart>
</feature>
<dbReference type="EC" id="1.14.-.-"/>
<dbReference type="EMBL" id="AB036059">
    <property type="protein sequence ID" value="BAA88569.1"/>
    <property type="molecule type" value="mRNA"/>
</dbReference>
<dbReference type="EMBL" id="AL138642">
    <property type="protein sequence ID" value="CAB71895.1"/>
    <property type="molecule type" value="Genomic_DNA"/>
</dbReference>
<dbReference type="EMBL" id="CP002686">
    <property type="protein sequence ID" value="AEE80273.1"/>
    <property type="molecule type" value="Genomic_DNA"/>
</dbReference>
<dbReference type="EMBL" id="AY062748">
    <property type="protein sequence ID" value="AAL32826.1"/>
    <property type="molecule type" value="mRNA"/>
</dbReference>
<dbReference type="EMBL" id="BT008891">
    <property type="protein sequence ID" value="AAP68330.1"/>
    <property type="molecule type" value="mRNA"/>
</dbReference>
<dbReference type="EMBL" id="AY086928">
    <property type="protein sequence ID" value="AAM64492.1"/>
    <property type="molecule type" value="mRNA"/>
</dbReference>
<dbReference type="PIR" id="T47980">
    <property type="entry name" value="T47980"/>
</dbReference>
<dbReference type="RefSeq" id="NP_191747.1">
    <molecule id="Q9SLP1-1"/>
    <property type="nucleotide sequence ID" value="NM_116053.3"/>
</dbReference>
<dbReference type="SMR" id="Q9SLP1"/>
<dbReference type="BioGRID" id="10675">
    <property type="interactions" value="6"/>
</dbReference>
<dbReference type="FunCoup" id="Q9SLP1">
    <property type="interactions" value="129"/>
</dbReference>
<dbReference type="IntAct" id="Q9SLP1">
    <property type="interactions" value="6"/>
</dbReference>
<dbReference type="STRING" id="3702.Q9SLP1"/>
<dbReference type="PaxDb" id="3702-AT3G61880.2"/>
<dbReference type="ProteomicsDB" id="240498">
    <molecule id="Q9SLP1-1"/>
</dbReference>
<dbReference type="EnsemblPlants" id="AT3G61880.1">
    <molecule id="Q9SLP1-1"/>
    <property type="protein sequence ID" value="AT3G61880.1"/>
    <property type="gene ID" value="AT3G61880"/>
</dbReference>
<dbReference type="GeneID" id="825361"/>
<dbReference type="Gramene" id="AT3G61880.1">
    <molecule id="Q9SLP1-1"/>
    <property type="protein sequence ID" value="AT3G61880.1"/>
    <property type="gene ID" value="AT3G61880"/>
</dbReference>
<dbReference type="KEGG" id="ath:AT3G61880"/>
<dbReference type="Araport" id="AT3G61880"/>
<dbReference type="TAIR" id="AT3G61880">
    <property type="gene designation" value="CYP78A9"/>
</dbReference>
<dbReference type="eggNOG" id="KOG0156">
    <property type="taxonomic scope" value="Eukaryota"/>
</dbReference>
<dbReference type="HOGENOM" id="CLU_001570_4_0_1"/>
<dbReference type="InParanoid" id="Q9SLP1"/>
<dbReference type="OMA" id="SLAFCNW"/>
<dbReference type="PhylomeDB" id="Q9SLP1"/>
<dbReference type="BioCyc" id="ARA:AT3G61880-MONOMER"/>
<dbReference type="PRO" id="PR:Q9SLP1"/>
<dbReference type="Proteomes" id="UP000006548">
    <property type="component" value="Chromosome 3"/>
</dbReference>
<dbReference type="ExpressionAtlas" id="Q9SLP1">
    <property type="expression patterns" value="baseline and differential"/>
</dbReference>
<dbReference type="GO" id="GO:0016020">
    <property type="term" value="C:membrane"/>
    <property type="evidence" value="ECO:0007669"/>
    <property type="project" value="UniProtKB-SubCell"/>
</dbReference>
<dbReference type="GO" id="GO:0020037">
    <property type="term" value="F:heme binding"/>
    <property type="evidence" value="ECO:0007669"/>
    <property type="project" value="InterPro"/>
</dbReference>
<dbReference type="GO" id="GO:0005506">
    <property type="term" value="F:iron ion binding"/>
    <property type="evidence" value="ECO:0007669"/>
    <property type="project" value="InterPro"/>
</dbReference>
<dbReference type="GO" id="GO:0004497">
    <property type="term" value="F:monooxygenase activity"/>
    <property type="evidence" value="ECO:0007669"/>
    <property type="project" value="UniProtKB-KW"/>
</dbReference>
<dbReference type="GO" id="GO:0016705">
    <property type="term" value="F:oxidoreductase activity, acting on paired donors, with incorporation or reduction of molecular oxygen"/>
    <property type="evidence" value="ECO:0007669"/>
    <property type="project" value="InterPro"/>
</dbReference>
<dbReference type="GO" id="GO:0010154">
    <property type="term" value="P:fruit development"/>
    <property type="evidence" value="ECO:0000316"/>
    <property type="project" value="UniProtKB"/>
</dbReference>
<dbReference type="GO" id="GO:0048316">
    <property type="term" value="P:seed development"/>
    <property type="evidence" value="ECO:0000316"/>
    <property type="project" value="UniProtKB"/>
</dbReference>
<dbReference type="CDD" id="cd11076">
    <property type="entry name" value="CYP78"/>
    <property type="match status" value="1"/>
</dbReference>
<dbReference type="FunFam" id="1.10.630.10:FF:000016">
    <property type="entry name" value="Cytochrome P450 78A5"/>
    <property type="match status" value="1"/>
</dbReference>
<dbReference type="Gene3D" id="1.10.630.10">
    <property type="entry name" value="Cytochrome P450"/>
    <property type="match status" value="1"/>
</dbReference>
<dbReference type="InterPro" id="IPR001128">
    <property type="entry name" value="Cyt_P450"/>
</dbReference>
<dbReference type="InterPro" id="IPR017972">
    <property type="entry name" value="Cyt_P450_CS"/>
</dbReference>
<dbReference type="InterPro" id="IPR002401">
    <property type="entry name" value="Cyt_P450_E_grp-I"/>
</dbReference>
<dbReference type="InterPro" id="IPR036396">
    <property type="entry name" value="Cyt_P450_sf"/>
</dbReference>
<dbReference type="InterPro" id="IPR051996">
    <property type="entry name" value="Cytochrome_P450_78A"/>
</dbReference>
<dbReference type="PANTHER" id="PTHR47946">
    <property type="entry name" value="CYTOCHROME P450 78A7-RELATED"/>
    <property type="match status" value="1"/>
</dbReference>
<dbReference type="PANTHER" id="PTHR47946:SF23">
    <property type="entry name" value="CYTOCHROME P450 78A9"/>
    <property type="match status" value="1"/>
</dbReference>
<dbReference type="Pfam" id="PF00067">
    <property type="entry name" value="p450"/>
    <property type="match status" value="1"/>
</dbReference>
<dbReference type="PRINTS" id="PR00463">
    <property type="entry name" value="EP450I"/>
</dbReference>
<dbReference type="PRINTS" id="PR00385">
    <property type="entry name" value="P450"/>
</dbReference>
<dbReference type="SUPFAM" id="SSF48264">
    <property type="entry name" value="Cytochrome P450"/>
    <property type="match status" value="1"/>
</dbReference>
<dbReference type="PROSITE" id="PS00086">
    <property type="entry name" value="CYTOCHROME_P450"/>
    <property type="match status" value="1"/>
</dbReference>
<sequence>MATKLDTSSLLLALLSKCSLLTQTNLALSLLVASLASLALSLFFWSHPGGPAWGKYFLHRRRQTTVIPGPRGLPFVGSMSLMSNTLAHRCIAATAEKFRAERLMAFSLGETRVIVTCNPDVAKEILNSPVFADRPVKESAYSLMFNRAIGFAPYGVYWRTLRKIASNHLFSPKQIKRSETQRSVIANQIVKCLTKQSNTKGLCFARDLIKTASLNNMMCSVFGKEYELEEEHEEVSELRELVEEGYDLLGTLNWTDHLPWLSEFDPQRIRSRCSNLVPKVNRFVNRIISDHREQTRDSPSDFVDVLLSLDGPDKLSDPDIIAVLWEMIFRGTDTVAVLIEWILARMVLHPDIQSTVHNELDQIVGRSRAVEESDVVSLVYLTAVVKEVLRLHPPGPLLSWARLAITDTIIDGRRVPAGTTAMVNMWAIAHDPHVWENPLEFKPERFVAKEGEVEFSVLGSDLRLAPFGSGRRVCPGKNLGLTTVTFWTATLLHEFEWLTPSDEKTVDLSEKLRLSCEMANPLAAKLRPRRSFSV</sequence>
<keyword id="KW-0025">Alternative splicing</keyword>
<keyword id="KW-0217">Developmental protein</keyword>
<keyword id="KW-0341">Growth regulation</keyword>
<keyword id="KW-0349">Heme</keyword>
<keyword id="KW-0408">Iron</keyword>
<keyword id="KW-0472">Membrane</keyword>
<keyword id="KW-0479">Metal-binding</keyword>
<keyword id="KW-0503">Monooxygenase</keyword>
<keyword id="KW-0560">Oxidoreductase</keyword>
<keyword id="KW-1185">Reference proteome</keyword>
<keyword id="KW-0812">Transmembrane</keyword>
<keyword id="KW-1133">Transmembrane helix</keyword>
<gene>
    <name type="primary">CYP78A9</name>
    <name type="ordered locus">At3g61880</name>
    <name type="ORF">F21F14.50</name>
</gene>
<protein>
    <recommendedName>
        <fullName>Cytochrome P450 78A9</fullName>
        <ecNumber>1.14.-.-</ecNumber>
    </recommendedName>
</protein>
<proteinExistence type="evidence at protein level"/>
<organism>
    <name type="scientific">Arabidopsis thaliana</name>
    <name type="common">Mouse-ear cress</name>
    <dbReference type="NCBI Taxonomy" id="3702"/>
    <lineage>
        <taxon>Eukaryota</taxon>
        <taxon>Viridiplantae</taxon>
        <taxon>Streptophyta</taxon>
        <taxon>Embryophyta</taxon>
        <taxon>Tracheophyta</taxon>
        <taxon>Spermatophyta</taxon>
        <taxon>Magnoliopsida</taxon>
        <taxon>eudicotyledons</taxon>
        <taxon>Gunneridae</taxon>
        <taxon>Pentapetalae</taxon>
        <taxon>rosids</taxon>
        <taxon>malvids</taxon>
        <taxon>Brassicales</taxon>
        <taxon>Brassicaceae</taxon>
        <taxon>Camelineae</taxon>
        <taxon>Arabidopsis</taxon>
    </lineage>
</organism>
<evidence type="ECO:0000250" key="1"/>
<evidence type="ECO:0000255" key="2"/>
<evidence type="ECO:0000269" key="3">
    <source>
    </source>
</evidence>
<evidence type="ECO:0000269" key="4">
    <source>
    </source>
</evidence>
<evidence type="ECO:0000269" key="5">
    <source>
    </source>
</evidence>
<evidence type="ECO:0000305" key="6"/>
<evidence type="ECO:0000305" key="7">
    <source>
    </source>
</evidence>
<reference key="1">
    <citation type="journal article" date="2000" name="Plant Cell">
        <title>Overexpression of a gene encoding a cytochrome P450, CYP78A9, induces large and seedless fruit in arabidopsis.</title>
        <authorList>
            <person name="Ito T."/>
            <person name="Meyerowitz E.M."/>
        </authorList>
    </citation>
    <scope>NUCLEOTIDE SEQUENCE [MRNA]</scope>
    <scope>FUNCTION</scope>
    <scope>TISSUE SPECIFICITY</scope>
</reference>
<reference key="2">
    <citation type="journal article" date="2000" name="Nature">
        <title>Sequence and analysis of chromosome 3 of the plant Arabidopsis thaliana.</title>
        <authorList>
            <person name="Salanoubat M."/>
            <person name="Lemcke K."/>
            <person name="Rieger M."/>
            <person name="Ansorge W."/>
            <person name="Unseld M."/>
            <person name="Fartmann B."/>
            <person name="Valle G."/>
            <person name="Bloecker H."/>
            <person name="Perez-Alonso M."/>
            <person name="Obermaier B."/>
            <person name="Delseny M."/>
            <person name="Boutry M."/>
            <person name="Grivell L.A."/>
            <person name="Mache R."/>
            <person name="Puigdomenech P."/>
            <person name="De Simone V."/>
            <person name="Choisne N."/>
            <person name="Artiguenave F."/>
            <person name="Robert C."/>
            <person name="Brottier P."/>
            <person name="Wincker P."/>
            <person name="Cattolico L."/>
            <person name="Weissenbach J."/>
            <person name="Saurin W."/>
            <person name="Quetier F."/>
            <person name="Schaefer M."/>
            <person name="Mueller-Auer S."/>
            <person name="Gabel C."/>
            <person name="Fuchs M."/>
            <person name="Benes V."/>
            <person name="Wurmbach E."/>
            <person name="Drzonek H."/>
            <person name="Erfle H."/>
            <person name="Jordan N."/>
            <person name="Bangert S."/>
            <person name="Wiedelmann R."/>
            <person name="Kranz H."/>
            <person name="Voss H."/>
            <person name="Holland R."/>
            <person name="Brandt P."/>
            <person name="Nyakatura G."/>
            <person name="Vezzi A."/>
            <person name="D'Angelo M."/>
            <person name="Pallavicini A."/>
            <person name="Toppo S."/>
            <person name="Simionati B."/>
            <person name="Conrad A."/>
            <person name="Hornischer K."/>
            <person name="Kauer G."/>
            <person name="Loehnert T.-H."/>
            <person name="Nordsiek G."/>
            <person name="Reichelt J."/>
            <person name="Scharfe M."/>
            <person name="Schoen O."/>
            <person name="Bargues M."/>
            <person name="Terol J."/>
            <person name="Climent J."/>
            <person name="Navarro P."/>
            <person name="Collado C."/>
            <person name="Perez-Perez A."/>
            <person name="Ottenwaelder B."/>
            <person name="Duchemin D."/>
            <person name="Cooke R."/>
            <person name="Laudie M."/>
            <person name="Berger-Llauro C."/>
            <person name="Purnelle B."/>
            <person name="Masuy D."/>
            <person name="de Haan M."/>
            <person name="Maarse A.C."/>
            <person name="Alcaraz J.-P."/>
            <person name="Cottet A."/>
            <person name="Casacuberta E."/>
            <person name="Monfort A."/>
            <person name="Argiriou A."/>
            <person name="Flores M."/>
            <person name="Liguori R."/>
            <person name="Vitale D."/>
            <person name="Mannhaupt G."/>
            <person name="Haase D."/>
            <person name="Schoof H."/>
            <person name="Rudd S."/>
            <person name="Zaccaria P."/>
            <person name="Mewes H.-W."/>
            <person name="Mayer K.F.X."/>
            <person name="Kaul S."/>
            <person name="Town C.D."/>
            <person name="Koo H.L."/>
            <person name="Tallon L.J."/>
            <person name="Jenkins J."/>
            <person name="Rooney T."/>
            <person name="Rizzo M."/>
            <person name="Walts A."/>
            <person name="Utterback T."/>
            <person name="Fujii C.Y."/>
            <person name="Shea T.P."/>
            <person name="Creasy T.H."/>
            <person name="Haas B."/>
            <person name="Maiti R."/>
            <person name="Wu D."/>
            <person name="Peterson J."/>
            <person name="Van Aken S."/>
            <person name="Pai G."/>
            <person name="Militscher J."/>
            <person name="Sellers P."/>
            <person name="Gill J.E."/>
            <person name="Feldblyum T.V."/>
            <person name="Preuss D."/>
            <person name="Lin X."/>
            <person name="Nierman W.C."/>
            <person name="Salzberg S.L."/>
            <person name="White O."/>
            <person name="Venter J.C."/>
            <person name="Fraser C.M."/>
            <person name="Kaneko T."/>
            <person name="Nakamura Y."/>
            <person name="Sato S."/>
            <person name="Kato T."/>
            <person name="Asamizu E."/>
            <person name="Sasamoto S."/>
            <person name="Kimura T."/>
            <person name="Idesawa K."/>
            <person name="Kawashima K."/>
            <person name="Kishida Y."/>
            <person name="Kiyokawa C."/>
            <person name="Kohara M."/>
            <person name="Matsumoto M."/>
            <person name="Matsuno A."/>
            <person name="Muraki A."/>
            <person name="Nakayama S."/>
            <person name="Nakazaki N."/>
            <person name="Shinpo S."/>
            <person name="Takeuchi C."/>
            <person name="Wada T."/>
            <person name="Watanabe A."/>
            <person name="Yamada M."/>
            <person name="Yasuda M."/>
            <person name="Tabata S."/>
        </authorList>
    </citation>
    <scope>NUCLEOTIDE SEQUENCE [LARGE SCALE GENOMIC DNA]</scope>
    <source>
        <strain>cv. Columbia</strain>
    </source>
</reference>
<reference key="3">
    <citation type="journal article" date="2017" name="Plant J.">
        <title>Araport11: a complete reannotation of the Arabidopsis thaliana reference genome.</title>
        <authorList>
            <person name="Cheng C.Y."/>
            <person name="Krishnakumar V."/>
            <person name="Chan A.P."/>
            <person name="Thibaud-Nissen F."/>
            <person name="Schobel S."/>
            <person name="Town C.D."/>
        </authorList>
    </citation>
    <scope>GENOME REANNOTATION</scope>
    <source>
        <strain>cv. Columbia</strain>
    </source>
</reference>
<reference key="4">
    <citation type="journal article" date="2003" name="Science">
        <title>Empirical analysis of transcriptional activity in the Arabidopsis genome.</title>
        <authorList>
            <person name="Yamada K."/>
            <person name="Lim J."/>
            <person name="Dale J.M."/>
            <person name="Chen H."/>
            <person name="Shinn P."/>
            <person name="Palm C.J."/>
            <person name="Southwick A.M."/>
            <person name="Wu H.C."/>
            <person name="Kim C.J."/>
            <person name="Nguyen M."/>
            <person name="Pham P.K."/>
            <person name="Cheuk R.F."/>
            <person name="Karlin-Newmann G."/>
            <person name="Liu S.X."/>
            <person name="Lam B."/>
            <person name="Sakano H."/>
            <person name="Wu T."/>
            <person name="Yu G."/>
            <person name="Miranda M."/>
            <person name="Quach H.L."/>
            <person name="Tripp M."/>
            <person name="Chang C.H."/>
            <person name="Lee J.M."/>
            <person name="Toriumi M.J."/>
            <person name="Chan M.M."/>
            <person name="Tang C.C."/>
            <person name="Onodera C.S."/>
            <person name="Deng J.M."/>
            <person name="Akiyama K."/>
            <person name="Ansari Y."/>
            <person name="Arakawa T."/>
            <person name="Banh J."/>
            <person name="Banno F."/>
            <person name="Bowser L."/>
            <person name="Brooks S.Y."/>
            <person name="Carninci P."/>
            <person name="Chao Q."/>
            <person name="Choy N."/>
            <person name="Enju A."/>
            <person name="Goldsmith A.D."/>
            <person name="Gurjal M."/>
            <person name="Hansen N.F."/>
            <person name="Hayashizaki Y."/>
            <person name="Johnson-Hopson C."/>
            <person name="Hsuan V.W."/>
            <person name="Iida K."/>
            <person name="Karnes M."/>
            <person name="Khan S."/>
            <person name="Koesema E."/>
            <person name="Ishida J."/>
            <person name="Jiang P.X."/>
            <person name="Jones T."/>
            <person name="Kawai J."/>
            <person name="Kamiya A."/>
            <person name="Meyers C."/>
            <person name="Nakajima M."/>
            <person name="Narusaka M."/>
            <person name="Seki M."/>
            <person name="Sakurai T."/>
            <person name="Satou M."/>
            <person name="Tamse R."/>
            <person name="Vaysberg M."/>
            <person name="Wallender E.K."/>
            <person name="Wong C."/>
            <person name="Yamamura Y."/>
            <person name="Yuan S."/>
            <person name="Shinozaki K."/>
            <person name="Davis R.W."/>
            <person name="Theologis A."/>
            <person name="Ecker J.R."/>
        </authorList>
    </citation>
    <scope>NUCLEOTIDE SEQUENCE [LARGE SCALE MRNA]</scope>
    <source>
        <strain>cv. Columbia</strain>
    </source>
</reference>
<reference key="5">
    <citation type="submission" date="2002-03" db="EMBL/GenBank/DDBJ databases">
        <title>Full-length cDNA from Arabidopsis thaliana.</title>
        <authorList>
            <person name="Brover V.V."/>
            <person name="Troukhan M.E."/>
            <person name="Alexandrov N.A."/>
            <person name="Lu Y.-P."/>
            <person name="Flavell R.B."/>
            <person name="Feldmann K.A."/>
        </authorList>
    </citation>
    <scope>NUCLEOTIDE SEQUENCE [LARGE SCALE MRNA]</scope>
</reference>
<reference key="6">
    <citation type="journal article" date="2009" name="Proc. Natl. Acad. Sci. U.S.A.">
        <title>Local maternal control of seed size by KLUH/CYP78A5-dependent growth signaling.</title>
        <authorList>
            <person name="Adamski N.M."/>
            <person name="Anastasiou E."/>
            <person name="Eriksson S."/>
            <person name="O'Neill C.M."/>
            <person name="Lenhard M."/>
        </authorList>
    </citation>
    <scope>FUNCTION</scope>
    <scope>DISRUPTION PHENOTYPE</scope>
</reference>
<reference key="7">
    <citation type="journal article" date="2012" name="Plant J.">
        <title>Maternal control of seed size by EOD3/CYP78A6 in Arabidopsis thaliana.</title>
        <authorList>
            <person name="Fang W."/>
            <person name="Wang Z."/>
            <person name="Cui R."/>
            <person name="Li J."/>
            <person name="Li Y."/>
        </authorList>
    </citation>
    <scope>FUNCTION</scope>
</reference>